<proteinExistence type="inferred from homology"/>
<evidence type="ECO:0000255" key="1">
    <source>
        <dbReference type="HAMAP-Rule" id="MF_00268"/>
    </source>
</evidence>
<feature type="chain" id="PRO_1000114329" description="Protein RecA">
    <location>
        <begin position="1"/>
        <end position="349"/>
    </location>
</feature>
<feature type="binding site" evidence="1">
    <location>
        <begin position="69"/>
        <end position="76"/>
    </location>
    <ligand>
        <name>ATP</name>
        <dbReference type="ChEBI" id="CHEBI:30616"/>
    </ligand>
</feature>
<dbReference type="EMBL" id="CP000806">
    <property type="protein sequence ID" value="ACB53987.1"/>
    <property type="molecule type" value="Genomic_DNA"/>
</dbReference>
<dbReference type="RefSeq" id="WP_009543313.1">
    <property type="nucleotide sequence ID" value="NC_010546.1"/>
</dbReference>
<dbReference type="SMR" id="B1WW59"/>
<dbReference type="STRING" id="43989.cce_4639"/>
<dbReference type="KEGG" id="cyt:cce_4639"/>
<dbReference type="eggNOG" id="COG0468">
    <property type="taxonomic scope" value="Bacteria"/>
</dbReference>
<dbReference type="HOGENOM" id="CLU_040469_3_2_3"/>
<dbReference type="OrthoDB" id="9776733at2"/>
<dbReference type="Proteomes" id="UP000001203">
    <property type="component" value="Chromosome circular"/>
</dbReference>
<dbReference type="GO" id="GO:0005829">
    <property type="term" value="C:cytosol"/>
    <property type="evidence" value="ECO:0007669"/>
    <property type="project" value="TreeGrafter"/>
</dbReference>
<dbReference type="GO" id="GO:0005524">
    <property type="term" value="F:ATP binding"/>
    <property type="evidence" value="ECO:0007669"/>
    <property type="project" value="UniProtKB-UniRule"/>
</dbReference>
<dbReference type="GO" id="GO:0016887">
    <property type="term" value="F:ATP hydrolysis activity"/>
    <property type="evidence" value="ECO:0007669"/>
    <property type="project" value="InterPro"/>
</dbReference>
<dbReference type="GO" id="GO:0140664">
    <property type="term" value="F:ATP-dependent DNA damage sensor activity"/>
    <property type="evidence" value="ECO:0007669"/>
    <property type="project" value="InterPro"/>
</dbReference>
<dbReference type="GO" id="GO:0003684">
    <property type="term" value="F:damaged DNA binding"/>
    <property type="evidence" value="ECO:0007669"/>
    <property type="project" value="UniProtKB-UniRule"/>
</dbReference>
<dbReference type="GO" id="GO:0003697">
    <property type="term" value="F:single-stranded DNA binding"/>
    <property type="evidence" value="ECO:0007669"/>
    <property type="project" value="UniProtKB-UniRule"/>
</dbReference>
<dbReference type="GO" id="GO:0006310">
    <property type="term" value="P:DNA recombination"/>
    <property type="evidence" value="ECO:0007669"/>
    <property type="project" value="UniProtKB-UniRule"/>
</dbReference>
<dbReference type="GO" id="GO:0006281">
    <property type="term" value="P:DNA repair"/>
    <property type="evidence" value="ECO:0007669"/>
    <property type="project" value="UniProtKB-UniRule"/>
</dbReference>
<dbReference type="GO" id="GO:0009432">
    <property type="term" value="P:SOS response"/>
    <property type="evidence" value="ECO:0007669"/>
    <property type="project" value="UniProtKB-UniRule"/>
</dbReference>
<dbReference type="CDD" id="cd00983">
    <property type="entry name" value="RecA"/>
    <property type="match status" value="1"/>
</dbReference>
<dbReference type="FunFam" id="3.40.50.300:FF:000087">
    <property type="entry name" value="Recombinase RecA"/>
    <property type="match status" value="1"/>
</dbReference>
<dbReference type="Gene3D" id="3.40.50.300">
    <property type="entry name" value="P-loop containing nucleotide triphosphate hydrolases"/>
    <property type="match status" value="1"/>
</dbReference>
<dbReference type="HAMAP" id="MF_00268">
    <property type="entry name" value="RecA"/>
    <property type="match status" value="1"/>
</dbReference>
<dbReference type="InterPro" id="IPR003593">
    <property type="entry name" value="AAA+_ATPase"/>
</dbReference>
<dbReference type="InterPro" id="IPR013765">
    <property type="entry name" value="DNA_recomb/repair_RecA"/>
</dbReference>
<dbReference type="InterPro" id="IPR020584">
    <property type="entry name" value="DNA_recomb/repair_RecA_CS"/>
</dbReference>
<dbReference type="InterPro" id="IPR027417">
    <property type="entry name" value="P-loop_NTPase"/>
</dbReference>
<dbReference type="InterPro" id="IPR049261">
    <property type="entry name" value="RecA-like_C"/>
</dbReference>
<dbReference type="InterPro" id="IPR049428">
    <property type="entry name" value="RecA-like_N"/>
</dbReference>
<dbReference type="InterPro" id="IPR020588">
    <property type="entry name" value="RecA_ATP-bd"/>
</dbReference>
<dbReference type="InterPro" id="IPR023400">
    <property type="entry name" value="RecA_C_sf"/>
</dbReference>
<dbReference type="InterPro" id="IPR020587">
    <property type="entry name" value="RecA_monomer-monomer_interface"/>
</dbReference>
<dbReference type="NCBIfam" id="TIGR02012">
    <property type="entry name" value="tigrfam_recA"/>
    <property type="match status" value="1"/>
</dbReference>
<dbReference type="PANTHER" id="PTHR45900:SF1">
    <property type="entry name" value="MITOCHONDRIAL DNA REPAIR PROTEIN RECA HOMOLOG-RELATED"/>
    <property type="match status" value="1"/>
</dbReference>
<dbReference type="PANTHER" id="PTHR45900">
    <property type="entry name" value="RECA"/>
    <property type="match status" value="1"/>
</dbReference>
<dbReference type="Pfam" id="PF00154">
    <property type="entry name" value="RecA"/>
    <property type="match status" value="1"/>
</dbReference>
<dbReference type="Pfam" id="PF21096">
    <property type="entry name" value="RecA_C"/>
    <property type="match status" value="1"/>
</dbReference>
<dbReference type="PRINTS" id="PR00142">
    <property type="entry name" value="RECA"/>
</dbReference>
<dbReference type="SMART" id="SM00382">
    <property type="entry name" value="AAA"/>
    <property type="match status" value="1"/>
</dbReference>
<dbReference type="SUPFAM" id="SSF52540">
    <property type="entry name" value="P-loop containing nucleoside triphosphate hydrolases"/>
    <property type="match status" value="1"/>
</dbReference>
<dbReference type="SUPFAM" id="SSF54752">
    <property type="entry name" value="RecA protein, C-terminal domain"/>
    <property type="match status" value="1"/>
</dbReference>
<dbReference type="PROSITE" id="PS00321">
    <property type="entry name" value="RECA_1"/>
    <property type="match status" value="1"/>
</dbReference>
<dbReference type="PROSITE" id="PS50162">
    <property type="entry name" value="RECA_2"/>
    <property type="match status" value="1"/>
</dbReference>
<dbReference type="PROSITE" id="PS50163">
    <property type="entry name" value="RECA_3"/>
    <property type="match status" value="1"/>
</dbReference>
<protein>
    <recommendedName>
        <fullName evidence="1">Protein RecA</fullName>
    </recommendedName>
    <alternativeName>
        <fullName evidence="1">Recombinase A</fullName>
    </alternativeName>
</protein>
<comment type="function">
    <text evidence="1">Can catalyze the hydrolysis of ATP in the presence of single-stranded DNA, the ATP-dependent uptake of single-stranded DNA by duplex DNA, and the ATP-dependent hybridization of homologous single-stranded DNAs. It interacts with LexA causing its activation and leading to its autocatalytic cleavage.</text>
</comment>
<comment type="subcellular location">
    <subcellularLocation>
        <location evidence="1">Cytoplasm</location>
    </subcellularLocation>
</comment>
<comment type="similarity">
    <text evidence="1">Belongs to the RecA family.</text>
</comment>
<accession>B1WW59</accession>
<keyword id="KW-0067">ATP-binding</keyword>
<keyword id="KW-0963">Cytoplasm</keyword>
<keyword id="KW-0227">DNA damage</keyword>
<keyword id="KW-0233">DNA recombination</keyword>
<keyword id="KW-0234">DNA repair</keyword>
<keyword id="KW-0238">DNA-binding</keyword>
<keyword id="KW-0547">Nucleotide-binding</keyword>
<keyword id="KW-1185">Reference proteome</keyword>
<keyword id="KW-0742">SOS response</keyword>
<organism>
    <name type="scientific">Crocosphaera subtropica (strain ATCC 51142 / BH68)</name>
    <name type="common">Cyanothece sp. (strain ATCC 51142)</name>
    <dbReference type="NCBI Taxonomy" id="43989"/>
    <lineage>
        <taxon>Bacteria</taxon>
        <taxon>Bacillati</taxon>
        <taxon>Cyanobacteriota</taxon>
        <taxon>Cyanophyceae</taxon>
        <taxon>Oscillatoriophycideae</taxon>
        <taxon>Chroococcales</taxon>
        <taxon>Aphanothecaceae</taxon>
        <taxon>Crocosphaera</taxon>
        <taxon>Crocosphaera subtropica</taxon>
    </lineage>
</organism>
<gene>
    <name evidence="1" type="primary">recA</name>
    <name type="ordered locus">cce_4639</name>
</gene>
<name>RECA_CROS5</name>
<sequence>MAAITNNPDKEKALGLVLNQIERNFGKGSIMRLGDAARMKVETISTGALTLDLALGGGLPMGRVVEIYGPESSGKTTLALHAIAEVQKAGGVAAFVDAEHALDPTYSAALGVDINNLLVAQPDTGESALEIVDQLVRSAAVDVVVIDSVAALVPRAEIEGEMGDTQVGLQARLMSKALRKIAGNIGKSGCVVIFLNQLRQKIGITYGSPEVTTGGTALKFYASVRLDIRRIQTLKKGSEGEYGIRAKVKVAKNKVAPPFRIAEFDIIFGQGISRMGCMLDLAEQSDVVLRKGAWYSYNGDNISQGRDNAVKYLEENPKIAETIEQQVREKLELGSLSFAISQGDGEEEE</sequence>
<reference key="1">
    <citation type="journal article" date="2008" name="Proc. Natl. Acad. Sci. U.S.A.">
        <title>The genome of Cyanothece 51142, a unicellular diazotrophic cyanobacterium important in the marine nitrogen cycle.</title>
        <authorList>
            <person name="Welsh E.A."/>
            <person name="Liberton M."/>
            <person name="Stoeckel J."/>
            <person name="Loh T."/>
            <person name="Elvitigala T."/>
            <person name="Wang C."/>
            <person name="Wollam A."/>
            <person name="Fulton R.S."/>
            <person name="Clifton S.W."/>
            <person name="Jacobs J.M."/>
            <person name="Aurora R."/>
            <person name="Ghosh B.K."/>
            <person name="Sherman L.A."/>
            <person name="Smith R.D."/>
            <person name="Wilson R.K."/>
            <person name="Pakrasi H.B."/>
        </authorList>
    </citation>
    <scope>NUCLEOTIDE SEQUENCE [LARGE SCALE GENOMIC DNA]</scope>
    <source>
        <strain>ATCC 51142 / BH68</strain>
    </source>
</reference>